<gene>
    <name type="primary">exgD</name>
    <name type="ORF">NFIA_054930</name>
</gene>
<keyword id="KW-0119">Carbohydrate metabolism</keyword>
<keyword id="KW-1003">Cell membrane</keyword>
<keyword id="KW-0961">Cell wall biogenesis/degradation</keyword>
<keyword id="KW-0325">Glycoprotein</keyword>
<keyword id="KW-0326">Glycosidase</keyword>
<keyword id="KW-0378">Hydrolase</keyword>
<keyword id="KW-0472">Membrane</keyword>
<keyword id="KW-0624">Polysaccharide degradation</keyword>
<keyword id="KW-1185">Reference proteome</keyword>
<keyword id="KW-0735">Signal-anchor</keyword>
<keyword id="KW-0812">Transmembrane</keyword>
<keyword id="KW-1133">Transmembrane helix</keyword>
<comment type="function">
    <text evidence="1">Glucosidase involved in the degradation of cellulosic biomass. Active on lichenan (By similarity).</text>
</comment>
<comment type="catalytic activity">
    <reaction>
        <text>Successive hydrolysis of beta-D-glucose units from the non-reducing ends of (1-&gt;3)-beta-D-glucans, releasing alpha-glucose.</text>
        <dbReference type="EC" id="3.2.1.58"/>
    </reaction>
</comment>
<comment type="subcellular location">
    <subcellularLocation>
        <location evidence="4">Cell membrane</location>
        <topology evidence="4">Single-pass type II membrane protein</topology>
    </subcellularLocation>
</comment>
<comment type="similarity">
    <text evidence="4">Belongs to the glycosyl hydrolase 5 (cellulase A) family.</text>
</comment>
<accession>A1DMX4</accession>
<reference key="1">
    <citation type="journal article" date="2008" name="PLoS Genet.">
        <title>Genomic islands in the pathogenic filamentous fungus Aspergillus fumigatus.</title>
        <authorList>
            <person name="Fedorova N.D."/>
            <person name="Khaldi N."/>
            <person name="Joardar V.S."/>
            <person name="Maiti R."/>
            <person name="Amedeo P."/>
            <person name="Anderson M.J."/>
            <person name="Crabtree J."/>
            <person name="Silva J.C."/>
            <person name="Badger J.H."/>
            <person name="Albarraq A."/>
            <person name="Angiuoli S."/>
            <person name="Bussey H."/>
            <person name="Bowyer P."/>
            <person name="Cotty P.J."/>
            <person name="Dyer P.S."/>
            <person name="Egan A."/>
            <person name="Galens K."/>
            <person name="Fraser-Liggett C.M."/>
            <person name="Haas B.J."/>
            <person name="Inman J.M."/>
            <person name="Kent R."/>
            <person name="Lemieux S."/>
            <person name="Malavazi I."/>
            <person name="Orvis J."/>
            <person name="Roemer T."/>
            <person name="Ronning C.M."/>
            <person name="Sundaram J.P."/>
            <person name="Sutton G."/>
            <person name="Turner G."/>
            <person name="Venter J.C."/>
            <person name="White O.R."/>
            <person name="Whitty B.R."/>
            <person name="Youngman P."/>
            <person name="Wolfe K.H."/>
            <person name="Goldman G.H."/>
            <person name="Wortman J.R."/>
            <person name="Jiang B."/>
            <person name="Denning D.W."/>
            <person name="Nierman W.C."/>
        </authorList>
    </citation>
    <scope>NUCLEOTIDE SEQUENCE [LARGE SCALE GENOMIC DNA]</scope>
    <source>
        <strain>ATCC 1020 / DSM 3700 / CBS 544.65 / FGSC A1164 / JCM 1740 / NRRL 181 / WB 181</strain>
    </source>
</reference>
<feature type="chain" id="PRO_0000395169" description="Probable glucan 1,3-beta-glucosidase D">
    <location>
        <begin position="1"/>
        <end position="834"/>
    </location>
</feature>
<feature type="topological domain" description="Cytoplasmic" evidence="2">
    <location>
        <begin position="1"/>
        <end position="306"/>
    </location>
</feature>
<feature type="transmembrane region" description="Helical; Signal-anchor for type II membrane protein" evidence="2">
    <location>
        <begin position="307"/>
        <end position="327"/>
    </location>
</feature>
<feature type="topological domain" description="Extracellular" evidence="2">
    <location>
        <begin position="328"/>
        <end position="834"/>
    </location>
</feature>
<feature type="region of interest" description="Disordered" evidence="3">
    <location>
        <begin position="1"/>
        <end position="188"/>
    </location>
</feature>
<feature type="region of interest" description="Disordered" evidence="3">
    <location>
        <begin position="200"/>
        <end position="251"/>
    </location>
</feature>
<feature type="region of interest" description="Disordered" evidence="3">
    <location>
        <begin position="331"/>
        <end position="354"/>
    </location>
</feature>
<feature type="compositionally biased region" description="Basic and acidic residues" evidence="3">
    <location>
        <begin position="1"/>
        <end position="33"/>
    </location>
</feature>
<feature type="compositionally biased region" description="Acidic residues" evidence="3">
    <location>
        <begin position="34"/>
        <end position="45"/>
    </location>
</feature>
<feature type="compositionally biased region" description="Basic and acidic residues" evidence="3">
    <location>
        <begin position="46"/>
        <end position="76"/>
    </location>
</feature>
<feature type="compositionally biased region" description="Basic and acidic residues" evidence="3">
    <location>
        <begin position="98"/>
        <end position="173"/>
    </location>
</feature>
<feature type="compositionally biased region" description="Basic and acidic residues" evidence="3">
    <location>
        <begin position="201"/>
        <end position="218"/>
    </location>
</feature>
<feature type="compositionally biased region" description="Basic and acidic residues" evidence="3">
    <location>
        <begin position="228"/>
        <end position="245"/>
    </location>
</feature>
<feature type="active site" description="Proton donor" evidence="1">
    <location>
        <position position="600"/>
    </location>
</feature>
<feature type="active site" description="Nucleophile" evidence="1">
    <location>
        <position position="705"/>
    </location>
</feature>
<feature type="glycosylation site" description="N-linked (GlcNAc...) asparagine" evidence="2">
    <location>
        <position position="333"/>
    </location>
</feature>
<feature type="glycosylation site" description="N-linked (GlcNAc...) asparagine" evidence="2">
    <location>
        <position position="379"/>
    </location>
</feature>
<feature type="glycosylation site" description="N-linked (GlcNAc...) asparagine" evidence="2">
    <location>
        <position position="384"/>
    </location>
</feature>
<feature type="glycosylation site" description="N-linked (GlcNAc...) asparagine" evidence="2">
    <location>
        <position position="396"/>
    </location>
</feature>
<feature type="glycosylation site" description="N-linked (GlcNAc...) asparagine" evidence="2">
    <location>
        <position position="549"/>
    </location>
</feature>
<feature type="glycosylation site" description="N-linked (GlcNAc...) asparagine" evidence="2">
    <location>
        <position position="561"/>
    </location>
</feature>
<feature type="glycosylation site" description="N-linked (GlcNAc...) asparagine" evidence="2">
    <location>
        <position position="570"/>
    </location>
</feature>
<feature type="glycosylation site" description="N-linked (GlcNAc...) asparagine" evidence="2">
    <location>
        <position position="639"/>
    </location>
</feature>
<feature type="glycosylation site" description="N-linked (GlcNAc...) asparagine" evidence="2">
    <location>
        <position position="672"/>
    </location>
</feature>
<feature type="glycosylation site" description="N-linked (GlcNAc...) asparagine" evidence="2">
    <location>
        <position position="692"/>
    </location>
</feature>
<organism>
    <name type="scientific">Neosartorya fischeri (strain ATCC 1020 / DSM 3700 / CBS 544.65 / FGSC A1164 / JCM 1740 / NRRL 181 / WB 181)</name>
    <name type="common">Aspergillus fischerianus</name>
    <dbReference type="NCBI Taxonomy" id="331117"/>
    <lineage>
        <taxon>Eukaryota</taxon>
        <taxon>Fungi</taxon>
        <taxon>Dikarya</taxon>
        <taxon>Ascomycota</taxon>
        <taxon>Pezizomycotina</taxon>
        <taxon>Eurotiomycetes</taxon>
        <taxon>Eurotiomycetidae</taxon>
        <taxon>Eurotiales</taxon>
        <taxon>Aspergillaceae</taxon>
        <taxon>Aspergillus</taxon>
        <taxon>Aspergillus subgen. Fumigati</taxon>
    </lineage>
</organism>
<dbReference type="EC" id="3.2.1.58"/>
<dbReference type="EMBL" id="DS027698">
    <property type="protein sequence ID" value="EAW16145.1"/>
    <property type="molecule type" value="Genomic_DNA"/>
</dbReference>
<dbReference type="RefSeq" id="XP_001258042.1">
    <property type="nucleotide sequence ID" value="XM_001258041.1"/>
</dbReference>
<dbReference type="SMR" id="A1DMX4"/>
<dbReference type="STRING" id="331117.A1DMX4"/>
<dbReference type="GlyCosmos" id="A1DMX4">
    <property type="glycosylation" value="10 sites, No reported glycans"/>
</dbReference>
<dbReference type="EnsemblFungi" id="EAW16145">
    <property type="protein sequence ID" value="EAW16145"/>
    <property type="gene ID" value="NFIA_054930"/>
</dbReference>
<dbReference type="GeneID" id="4584557"/>
<dbReference type="KEGG" id="nfi:NFIA_054930"/>
<dbReference type="VEuPathDB" id="FungiDB:NFIA_054930"/>
<dbReference type="eggNOG" id="ENOG502QRG8">
    <property type="taxonomic scope" value="Eukaryota"/>
</dbReference>
<dbReference type="HOGENOM" id="CLU_004624_4_0_1"/>
<dbReference type="OMA" id="WYWTWKT"/>
<dbReference type="OrthoDB" id="62120at2759"/>
<dbReference type="Proteomes" id="UP000006702">
    <property type="component" value="Unassembled WGS sequence"/>
</dbReference>
<dbReference type="GO" id="GO:0009986">
    <property type="term" value="C:cell surface"/>
    <property type="evidence" value="ECO:0007669"/>
    <property type="project" value="TreeGrafter"/>
</dbReference>
<dbReference type="GO" id="GO:0005576">
    <property type="term" value="C:extracellular region"/>
    <property type="evidence" value="ECO:0007669"/>
    <property type="project" value="TreeGrafter"/>
</dbReference>
<dbReference type="GO" id="GO:0005886">
    <property type="term" value="C:plasma membrane"/>
    <property type="evidence" value="ECO:0007669"/>
    <property type="project" value="UniProtKB-SubCell"/>
</dbReference>
<dbReference type="GO" id="GO:0004338">
    <property type="term" value="F:glucan exo-1,3-beta-glucosidase activity"/>
    <property type="evidence" value="ECO:0007669"/>
    <property type="project" value="UniProtKB-EC"/>
</dbReference>
<dbReference type="GO" id="GO:0071555">
    <property type="term" value="P:cell wall organization"/>
    <property type="evidence" value="ECO:0007669"/>
    <property type="project" value="UniProtKB-KW"/>
</dbReference>
<dbReference type="GO" id="GO:0009251">
    <property type="term" value="P:glucan catabolic process"/>
    <property type="evidence" value="ECO:0007669"/>
    <property type="project" value="TreeGrafter"/>
</dbReference>
<dbReference type="FunFam" id="3.20.20.80:FF:000033">
    <property type="entry name" value="Glucan 1,3-beta-glucosidase A"/>
    <property type="match status" value="1"/>
</dbReference>
<dbReference type="Gene3D" id="3.20.20.80">
    <property type="entry name" value="Glycosidases"/>
    <property type="match status" value="1"/>
</dbReference>
<dbReference type="InterPro" id="IPR001547">
    <property type="entry name" value="Glyco_hydro_5"/>
</dbReference>
<dbReference type="InterPro" id="IPR017853">
    <property type="entry name" value="Glycoside_hydrolase_SF"/>
</dbReference>
<dbReference type="InterPro" id="IPR050386">
    <property type="entry name" value="Glycosyl_hydrolase_5"/>
</dbReference>
<dbReference type="PANTHER" id="PTHR31297:SF34">
    <property type="entry name" value="GLUCAN 1,3-BETA-GLUCOSIDASE 2"/>
    <property type="match status" value="1"/>
</dbReference>
<dbReference type="PANTHER" id="PTHR31297">
    <property type="entry name" value="GLUCAN ENDO-1,6-BETA-GLUCOSIDASE B"/>
    <property type="match status" value="1"/>
</dbReference>
<dbReference type="Pfam" id="PF00150">
    <property type="entry name" value="Cellulase"/>
    <property type="match status" value="1"/>
</dbReference>
<dbReference type="SUPFAM" id="SSF51445">
    <property type="entry name" value="(Trans)glycosidases"/>
    <property type="match status" value="1"/>
</dbReference>
<sequence>MPSHSRSRDRYGGRDSDREARYDYDYARRRYATDDNDDDYDDDELEHGLNERRYRRDGYLPPRESRTRGYYERDAEGAADEELLGDERNPGPRASRSYGHDYDARRGERSRAREAPRRSERHRDRDREGQSRRRAYEDDGRHRTRDGRRERGRESDAEARRSRRREAGRETAARKHQSSDSTNSASHLLSADALARLGAQYEKEERRKRENAKDAAKAERKRQKKRAVVGEESRALRDPPGESHRDRTKARVASGAYLEEGRSPEMQVRHRGGGGPAMEARWRKEGSWGGTMDDAGGGRPFWKRKKWIGLGALILILVIVIPVAVVVSKKHDNKSDPADPQGTSPGKSNLDGLSHDSIPAYAQGTYLDPWTWYDTTDFNVTFTNETVGGLSIMGLNSTWDDSARPNDNVPPLNEPFPYGSQPIRGVNLGGWLSIEPFIVPSLFDSYSSVAGIIDEWTLSKRLGSSAARTLEKHYATFITEQDFADIRDAGLDHVRIQYSYWAVATYDDDPYVAKISWRYLLRAIEYCRKYGLRVKLDPHGIPGSQNGWNHSGREGVIGWLNGTDGELNRNRSLAVHDSVSKFFAQDRYKNIVTIYGLVNEPLMLSLSVEDVLDWTTEATKLVQKNGITAYVALHDGFLNLSKWKSMLKNRPDKMLLDTHQYTIFNTGQIGLNHTAKVNLICNDWYNMIKEINSTSTGWGPTICGEWSQADTDCAKYLNNVGRGTRWEGTFSLTDSTQYCPTADTGPPCSCANANADVSEYSADYKKFLQTYAEAQMSAFETGQGWFYWTWRTESAAQWSYRTAWKNGFMPAKAYAPSFKCGDAVPDFGNLPEYY</sequence>
<name>EXGD_NEOFI</name>
<proteinExistence type="inferred from homology"/>
<evidence type="ECO:0000250" key="1"/>
<evidence type="ECO:0000255" key="2"/>
<evidence type="ECO:0000256" key="3">
    <source>
        <dbReference type="SAM" id="MobiDB-lite"/>
    </source>
</evidence>
<evidence type="ECO:0000305" key="4"/>
<protein>
    <recommendedName>
        <fullName>Probable glucan 1,3-beta-glucosidase D</fullName>
        <ecNumber>3.2.1.58</ecNumber>
    </recommendedName>
    <alternativeName>
        <fullName>Exo-1,3-beta-glucanase D</fullName>
    </alternativeName>
</protein>